<sequence>MFRIVKWLIALPVGIFIFFNAYVYGNIITYRAVAPHRTAFMSMRMKQFEQEGRDVALDYRWVPYNRISVNLKKALIASEDARFAGHGGFDWGGIQNAIRRNRNSGKVKAGGSTISQQLAKNLFLNESRSYIRKGEEAAITAMMEAVTDKDRIFELYLNSIEWHYGVFGAEAASRYFYQIPAAKLSKQQAAKLTARVPAPLYYADHPKSKRLRNKTNIVLRRMGSAELPESDTD</sequence>
<accession>A9M2N3</accession>
<proteinExistence type="inferred from homology"/>
<reference key="1">
    <citation type="journal article" date="2008" name="Genomics">
        <title>Characterization of ST-4821 complex, a unique Neisseria meningitidis clone.</title>
        <authorList>
            <person name="Peng J."/>
            <person name="Yang L."/>
            <person name="Yang F."/>
            <person name="Yang J."/>
            <person name="Yan Y."/>
            <person name="Nie H."/>
            <person name="Zhang X."/>
            <person name="Xiong Z."/>
            <person name="Jiang Y."/>
            <person name="Cheng F."/>
            <person name="Xu X."/>
            <person name="Chen S."/>
            <person name="Sun L."/>
            <person name="Li W."/>
            <person name="Shen Y."/>
            <person name="Shao Z."/>
            <person name="Liang X."/>
            <person name="Xu J."/>
            <person name="Jin Q."/>
        </authorList>
    </citation>
    <scope>NUCLEOTIDE SEQUENCE [LARGE SCALE GENOMIC DNA]</scope>
    <source>
        <strain>053442</strain>
    </source>
</reference>
<evidence type="ECO:0000255" key="1">
    <source>
        <dbReference type="HAMAP-Rule" id="MF_00766"/>
    </source>
</evidence>
<comment type="function">
    <text evidence="1">Peptidoglycan polymerase that catalyzes glycan chain elongation from lipid-linked precursors.</text>
</comment>
<comment type="catalytic activity">
    <reaction evidence="1">
        <text>[GlcNAc-(1-&gt;4)-Mur2Ac(oyl-L-Ala-gamma-D-Glu-L-Lys-D-Ala-D-Ala)](n)-di-trans,octa-cis-undecaprenyl diphosphate + beta-D-GlcNAc-(1-&gt;4)-Mur2Ac(oyl-L-Ala-gamma-D-Glu-L-Lys-D-Ala-D-Ala)-di-trans,octa-cis-undecaprenyl diphosphate = [GlcNAc-(1-&gt;4)-Mur2Ac(oyl-L-Ala-gamma-D-Glu-L-Lys-D-Ala-D-Ala)](n+1)-di-trans,octa-cis-undecaprenyl diphosphate + di-trans,octa-cis-undecaprenyl diphosphate + H(+)</text>
        <dbReference type="Rhea" id="RHEA:23708"/>
        <dbReference type="Rhea" id="RHEA-COMP:9602"/>
        <dbReference type="Rhea" id="RHEA-COMP:9603"/>
        <dbReference type="ChEBI" id="CHEBI:15378"/>
        <dbReference type="ChEBI" id="CHEBI:58405"/>
        <dbReference type="ChEBI" id="CHEBI:60033"/>
        <dbReference type="ChEBI" id="CHEBI:78435"/>
        <dbReference type="EC" id="2.4.99.28"/>
    </reaction>
</comment>
<comment type="pathway">
    <text evidence="1">Cell wall biogenesis; peptidoglycan biosynthesis.</text>
</comment>
<comment type="subcellular location">
    <subcellularLocation>
        <location evidence="1">Cell inner membrane</location>
        <topology evidence="1">Single-pass membrane protein</topology>
    </subcellularLocation>
</comment>
<comment type="similarity">
    <text evidence="1">Belongs to the glycosyltransferase 51 family.</text>
</comment>
<organism>
    <name type="scientific">Neisseria meningitidis serogroup C (strain 053442)</name>
    <dbReference type="NCBI Taxonomy" id="374833"/>
    <lineage>
        <taxon>Bacteria</taxon>
        <taxon>Pseudomonadati</taxon>
        <taxon>Pseudomonadota</taxon>
        <taxon>Betaproteobacteria</taxon>
        <taxon>Neisseriales</taxon>
        <taxon>Neisseriaceae</taxon>
        <taxon>Neisseria</taxon>
    </lineage>
</organism>
<dbReference type="EC" id="2.4.99.28" evidence="1"/>
<dbReference type="EMBL" id="CP000381">
    <property type="protein sequence ID" value="ABX73925.1"/>
    <property type="molecule type" value="Genomic_DNA"/>
</dbReference>
<dbReference type="RefSeq" id="WP_002231789.1">
    <property type="nucleotide sequence ID" value="NC_010120.1"/>
</dbReference>
<dbReference type="SMR" id="A9M2N3"/>
<dbReference type="CAZy" id="GT51">
    <property type="family name" value="Glycosyltransferase Family 51"/>
</dbReference>
<dbReference type="KEGG" id="nmn:NMCC_1784"/>
<dbReference type="HOGENOM" id="CLU_006354_1_0_4"/>
<dbReference type="UniPathway" id="UPA00219"/>
<dbReference type="Proteomes" id="UP000001177">
    <property type="component" value="Chromosome"/>
</dbReference>
<dbReference type="GO" id="GO:0009274">
    <property type="term" value="C:peptidoglycan-based cell wall"/>
    <property type="evidence" value="ECO:0007669"/>
    <property type="project" value="InterPro"/>
</dbReference>
<dbReference type="GO" id="GO:0005886">
    <property type="term" value="C:plasma membrane"/>
    <property type="evidence" value="ECO:0007669"/>
    <property type="project" value="UniProtKB-SubCell"/>
</dbReference>
<dbReference type="GO" id="GO:0016763">
    <property type="term" value="F:pentosyltransferase activity"/>
    <property type="evidence" value="ECO:0007669"/>
    <property type="project" value="InterPro"/>
</dbReference>
<dbReference type="GO" id="GO:0008955">
    <property type="term" value="F:peptidoglycan glycosyltransferase activity"/>
    <property type="evidence" value="ECO:0007669"/>
    <property type="project" value="UniProtKB-UniRule"/>
</dbReference>
<dbReference type="GO" id="GO:0071555">
    <property type="term" value="P:cell wall organization"/>
    <property type="evidence" value="ECO:0007669"/>
    <property type="project" value="UniProtKB-KW"/>
</dbReference>
<dbReference type="GO" id="GO:0009252">
    <property type="term" value="P:peptidoglycan biosynthetic process"/>
    <property type="evidence" value="ECO:0007669"/>
    <property type="project" value="UniProtKB-UniRule"/>
</dbReference>
<dbReference type="GO" id="GO:0008360">
    <property type="term" value="P:regulation of cell shape"/>
    <property type="evidence" value="ECO:0007669"/>
    <property type="project" value="UniProtKB-KW"/>
</dbReference>
<dbReference type="Gene3D" id="1.10.3810.10">
    <property type="entry name" value="Biosynthetic peptidoglycan transglycosylase-like"/>
    <property type="match status" value="1"/>
</dbReference>
<dbReference type="HAMAP" id="MF_00766">
    <property type="entry name" value="PGT_MtgA"/>
    <property type="match status" value="1"/>
</dbReference>
<dbReference type="InterPro" id="IPR001264">
    <property type="entry name" value="Glyco_trans_51"/>
</dbReference>
<dbReference type="InterPro" id="IPR023346">
    <property type="entry name" value="Lysozyme-like_dom_sf"/>
</dbReference>
<dbReference type="InterPro" id="IPR036950">
    <property type="entry name" value="PBP_transglycosylase"/>
</dbReference>
<dbReference type="InterPro" id="IPR011812">
    <property type="entry name" value="Pep_trsgly"/>
</dbReference>
<dbReference type="NCBIfam" id="TIGR02070">
    <property type="entry name" value="mono_pep_trsgly"/>
    <property type="match status" value="1"/>
</dbReference>
<dbReference type="PANTHER" id="PTHR30400:SF0">
    <property type="entry name" value="BIOSYNTHETIC PEPTIDOGLYCAN TRANSGLYCOSYLASE"/>
    <property type="match status" value="1"/>
</dbReference>
<dbReference type="PANTHER" id="PTHR30400">
    <property type="entry name" value="MONOFUNCTIONAL BIOSYNTHETIC PEPTIDOGLYCAN TRANSGLYCOSYLASE"/>
    <property type="match status" value="1"/>
</dbReference>
<dbReference type="Pfam" id="PF00912">
    <property type="entry name" value="Transgly"/>
    <property type="match status" value="1"/>
</dbReference>
<dbReference type="SUPFAM" id="SSF53955">
    <property type="entry name" value="Lysozyme-like"/>
    <property type="match status" value="1"/>
</dbReference>
<gene>
    <name evidence="1" type="primary">mtgA</name>
    <name type="ordered locus">NMCC_1784</name>
</gene>
<keyword id="KW-0997">Cell inner membrane</keyword>
<keyword id="KW-1003">Cell membrane</keyword>
<keyword id="KW-0133">Cell shape</keyword>
<keyword id="KW-0961">Cell wall biogenesis/degradation</keyword>
<keyword id="KW-0328">Glycosyltransferase</keyword>
<keyword id="KW-0472">Membrane</keyword>
<keyword id="KW-0573">Peptidoglycan synthesis</keyword>
<keyword id="KW-0808">Transferase</keyword>
<keyword id="KW-0812">Transmembrane</keyword>
<keyword id="KW-1133">Transmembrane helix</keyword>
<feature type="chain" id="PRO_1000083540" description="Biosynthetic peptidoglycan transglycosylase">
    <location>
        <begin position="1"/>
        <end position="233"/>
    </location>
</feature>
<feature type="transmembrane region" description="Helical" evidence="1">
    <location>
        <begin position="8"/>
        <end position="28"/>
    </location>
</feature>
<name>MTGA_NEIM0</name>
<protein>
    <recommendedName>
        <fullName evidence="1">Biosynthetic peptidoglycan transglycosylase</fullName>
        <ecNumber evidence="1">2.4.99.28</ecNumber>
    </recommendedName>
    <alternativeName>
        <fullName evidence="1">Glycan polymerase</fullName>
    </alternativeName>
    <alternativeName>
        <fullName evidence="1">Peptidoglycan glycosyltransferase MtgA</fullName>
        <shortName evidence="1">PGT</shortName>
    </alternativeName>
</protein>